<gene>
    <name type="primary">rpl32</name>
</gene>
<dbReference type="EMBL" id="AJ294725">
    <property type="protein sequence ID" value="CAC24575.1"/>
    <property type="molecule type" value="Genomic_DNA"/>
</dbReference>
<dbReference type="PIR" id="S14125">
    <property type="entry name" value="S14125"/>
</dbReference>
<dbReference type="RefSeq" id="NP_074964.1">
    <property type="nucleotide sequence ID" value="NC_002652.1"/>
</dbReference>
<dbReference type="SMR" id="P27751"/>
<dbReference type="GeneID" id="802496"/>
<dbReference type="GO" id="GO:0015934">
    <property type="term" value="C:large ribosomal subunit"/>
    <property type="evidence" value="ECO:0007669"/>
    <property type="project" value="InterPro"/>
</dbReference>
<dbReference type="GO" id="GO:0009536">
    <property type="term" value="C:plastid"/>
    <property type="evidence" value="ECO:0007669"/>
    <property type="project" value="UniProtKB-SubCell"/>
</dbReference>
<dbReference type="GO" id="GO:0003735">
    <property type="term" value="F:structural constituent of ribosome"/>
    <property type="evidence" value="ECO:0007669"/>
    <property type="project" value="InterPro"/>
</dbReference>
<dbReference type="GO" id="GO:0006412">
    <property type="term" value="P:translation"/>
    <property type="evidence" value="ECO:0007669"/>
    <property type="project" value="InterPro"/>
</dbReference>
<dbReference type="HAMAP" id="MF_00340">
    <property type="entry name" value="Ribosomal_bL32"/>
    <property type="match status" value="1"/>
</dbReference>
<dbReference type="InterPro" id="IPR002677">
    <property type="entry name" value="Ribosomal_bL32"/>
</dbReference>
<dbReference type="InterPro" id="IPR011332">
    <property type="entry name" value="Ribosomal_zn-bd"/>
</dbReference>
<dbReference type="NCBIfam" id="TIGR01031">
    <property type="entry name" value="rpmF_bact"/>
    <property type="match status" value="1"/>
</dbReference>
<dbReference type="Pfam" id="PF01783">
    <property type="entry name" value="Ribosomal_L32p"/>
    <property type="match status" value="1"/>
</dbReference>
<dbReference type="SUPFAM" id="SSF57829">
    <property type="entry name" value="Zn-binding ribosomal proteins"/>
    <property type="match status" value="1"/>
</dbReference>
<feature type="initiator methionine" description="Removed" evidence="1">
    <location>
        <position position="1"/>
    </location>
</feature>
<feature type="chain" id="PRO_0000172449" description="Large ribosomal subunit protein bL32c">
    <location>
        <begin position="2"/>
        <end position="50"/>
    </location>
</feature>
<comment type="subcellular location">
    <subcellularLocation>
        <location>Plastid</location>
    </subcellularLocation>
</comment>
<comment type="similarity">
    <text evidence="2">Belongs to the bacterial ribosomal protein bL32 family.</text>
</comment>
<protein>
    <recommendedName>
        <fullName evidence="2">Large ribosomal subunit protein bL32c</fullName>
    </recommendedName>
    <alternativeName>
        <fullName>50S ribosomal protein L32, plastid</fullName>
    </alternativeName>
</protein>
<geneLocation type="non-photosynthetic plastid"/>
<reference key="1">
    <citation type="journal article" date="1990" name="Plant Mol. Biol.">
        <title>Structure and expression of a gene encoding the large subunit of ribulose-1,5-bisphosphate carboxylase (rbcL) in the colourless euglenoid flagellate Astasia longa.</title>
        <authorList>
            <person name="Siemeister G."/>
            <person name="Hachtel W."/>
        </authorList>
    </citation>
    <scope>NUCLEOTIDE SEQUENCE [GENOMIC DNA]</scope>
    <source>
        <strain>CCAP 1204-17a</strain>
    </source>
</reference>
<reference key="2">
    <citation type="journal article" date="1990" name="Curr. Genet.">
        <title>Genes for ribosomal proteins are retained on the 73 kb DNA from Astasia longa that resembles Euglena chloroplast DNA.</title>
        <authorList>
            <person name="Siemeister G."/>
            <person name="Buchholz C."/>
            <person name="Hachtel W."/>
        </authorList>
    </citation>
    <scope>NUCLEOTIDE SEQUENCE [GENOMIC DNA]</scope>
    <source>
        <strain>CCAP 1204-17a</strain>
    </source>
</reference>
<reference key="3">
    <citation type="journal article" date="1994" name="Curr. Genet.">
        <title>Genes for components of the chloroplast translational apparatus are conserved in the reduced 73-kb plastid DNA of the nonphotosynthetic euglenoid flagellate Astasia longa.</title>
        <authorList>
            <person name="Gockel G."/>
            <person name="Hachtel W."/>
            <person name="Baier S."/>
            <person name="Fliss C."/>
            <person name="Henke M."/>
        </authorList>
    </citation>
    <scope>NUCLEOTIDE SEQUENCE [GENOMIC DNA]</scope>
    <source>
        <strain>CCAP 1204-17a</strain>
    </source>
</reference>
<reference key="4">
    <citation type="journal article" date="2000" name="Protist">
        <title>Complete gene map of the plastid genome of the nonphotosynthetic euglenoid flagellate Astasia longa.</title>
        <authorList>
            <person name="Gockel G."/>
            <person name="Hachtel W."/>
        </authorList>
    </citation>
    <scope>NUCLEOTIDE SEQUENCE [LARGE SCALE GENOMIC DNA]</scope>
    <source>
        <strain>CCAP 1204-17a</strain>
    </source>
</reference>
<accession>P27751</accession>
<accession>P34773</accession>
<evidence type="ECO:0000250" key="1"/>
<evidence type="ECO:0000305" key="2"/>
<proteinExistence type="inferred from homology"/>
<name>RK32_EUGLO</name>
<sequence length="50" mass="5759">MAVPKKKMSHSKSNSRKSNWKRKVIKKINFAVTLGKSLSFGKLSKFYLDD</sequence>
<keyword id="KW-0934">Plastid</keyword>
<keyword id="KW-0687">Ribonucleoprotein</keyword>
<keyword id="KW-0689">Ribosomal protein</keyword>
<organism>
    <name type="scientific">Euglena longa</name>
    <name type="common">Euglenophycean alga</name>
    <name type="synonym">Astasia longa</name>
    <dbReference type="NCBI Taxonomy" id="3037"/>
    <lineage>
        <taxon>Eukaryota</taxon>
        <taxon>Discoba</taxon>
        <taxon>Euglenozoa</taxon>
        <taxon>Euglenida</taxon>
        <taxon>Spirocuta</taxon>
        <taxon>Euglenophyceae</taxon>
        <taxon>Euglenales</taxon>
        <taxon>Euglenaceae</taxon>
        <taxon>Euglena</taxon>
    </lineage>
</organism>